<reference key="1">
    <citation type="journal article" date="2000" name="Nature">
        <title>Sequence and analysis of chromosome 3 of the plant Arabidopsis thaliana.</title>
        <authorList>
            <person name="Salanoubat M."/>
            <person name="Lemcke K."/>
            <person name="Rieger M."/>
            <person name="Ansorge W."/>
            <person name="Unseld M."/>
            <person name="Fartmann B."/>
            <person name="Valle G."/>
            <person name="Bloecker H."/>
            <person name="Perez-Alonso M."/>
            <person name="Obermaier B."/>
            <person name="Delseny M."/>
            <person name="Boutry M."/>
            <person name="Grivell L.A."/>
            <person name="Mache R."/>
            <person name="Puigdomenech P."/>
            <person name="De Simone V."/>
            <person name="Choisne N."/>
            <person name="Artiguenave F."/>
            <person name="Robert C."/>
            <person name="Brottier P."/>
            <person name="Wincker P."/>
            <person name="Cattolico L."/>
            <person name="Weissenbach J."/>
            <person name="Saurin W."/>
            <person name="Quetier F."/>
            <person name="Schaefer M."/>
            <person name="Mueller-Auer S."/>
            <person name="Gabel C."/>
            <person name="Fuchs M."/>
            <person name="Benes V."/>
            <person name="Wurmbach E."/>
            <person name="Drzonek H."/>
            <person name="Erfle H."/>
            <person name="Jordan N."/>
            <person name="Bangert S."/>
            <person name="Wiedelmann R."/>
            <person name="Kranz H."/>
            <person name="Voss H."/>
            <person name="Holland R."/>
            <person name="Brandt P."/>
            <person name="Nyakatura G."/>
            <person name="Vezzi A."/>
            <person name="D'Angelo M."/>
            <person name="Pallavicini A."/>
            <person name="Toppo S."/>
            <person name="Simionati B."/>
            <person name="Conrad A."/>
            <person name="Hornischer K."/>
            <person name="Kauer G."/>
            <person name="Loehnert T.-H."/>
            <person name="Nordsiek G."/>
            <person name="Reichelt J."/>
            <person name="Scharfe M."/>
            <person name="Schoen O."/>
            <person name="Bargues M."/>
            <person name="Terol J."/>
            <person name="Climent J."/>
            <person name="Navarro P."/>
            <person name="Collado C."/>
            <person name="Perez-Perez A."/>
            <person name="Ottenwaelder B."/>
            <person name="Duchemin D."/>
            <person name="Cooke R."/>
            <person name="Laudie M."/>
            <person name="Berger-Llauro C."/>
            <person name="Purnelle B."/>
            <person name="Masuy D."/>
            <person name="de Haan M."/>
            <person name="Maarse A.C."/>
            <person name="Alcaraz J.-P."/>
            <person name="Cottet A."/>
            <person name="Casacuberta E."/>
            <person name="Monfort A."/>
            <person name="Argiriou A."/>
            <person name="Flores M."/>
            <person name="Liguori R."/>
            <person name="Vitale D."/>
            <person name="Mannhaupt G."/>
            <person name="Haase D."/>
            <person name="Schoof H."/>
            <person name="Rudd S."/>
            <person name="Zaccaria P."/>
            <person name="Mewes H.-W."/>
            <person name="Mayer K.F.X."/>
            <person name="Kaul S."/>
            <person name="Town C.D."/>
            <person name="Koo H.L."/>
            <person name="Tallon L.J."/>
            <person name="Jenkins J."/>
            <person name="Rooney T."/>
            <person name="Rizzo M."/>
            <person name="Walts A."/>
            <person name="Utterback T."/>
            <person name="Fujii C.Y."/>
            <person name="Shea T.P."/>
            <person name="Creasy T.H."/>
            <person name="Haas B."/>
            <person name="Maiti R."/>
            <person name="Wu D."/>
            <person name="Peterson J."/>
            <person name="Van Aken S."/>
            <person name="Pai G."/>
            <person name="Militscher J."/>
            <person name="Sellers P."/>
            <person name="Gill J.E."/>
            <person name="Feldblyum T.V."/>
            <person name="Preuss D."/>
            <person name="Lin X."/>
            <person name="Nierman W.C."/>
            <person name="Salzberg S.L."/>
            <person name="White O."/>
            <person name="Venter J.C."/>
            <person name="Fraser C.M."/>
            <person name="Kaneko T."/>
            <person name="Nakamura Y."/>
            <person name="Sato S."/>
            <person name="Kato T."/>
            <person name="Asamizu E."/>
            <person name="Sasamoto S."/>
            <person name="Kimura T."/>
            <person name="Idesawa K."/>
            <person name="Kawashima K."/>
            <person name="Kishida Y."/>
            <person name="Kiyokawa C."/>
            <person name="Kohara M."/>
            <person name="Matsumoto M."/>
            <person name="Matsuno A."/>
            <person name="Muraki A."/>
            <person name="Nakayama S."/>
            <person name="Nakazaki N."/>
            <person name="Shinpo S."/>
            <person name="Takeuchi C."/>
            <person name="Wada T."/>
            <person name="Watanabe A."/>
            <person name="Yamada M."/>
            <person name="Yasuda M."/>
            <person name="Tabata S."/>
        </authorList>
    </citation>
    <scope>NUCLEOTIDE SEQUENCE [LARGE SCALE GENOMIC DNA]</scope>
    <source>
        <strain>cv. Columbia</strain>
    </source>
</reference>
<reference key="2">
    <citation type="journal article" date="2017" name="Plant J.">
        <title>Araport11: a complete reannotation of the Arabidopsis thaliana reference genome.</title>
        <authorList>
            <person name="Cheng C.Y."/>
            <person name="Krishnakumar V."/>
            <person name="Chan A.P."/>
            <person name="Thibaud-Nissen F."/>
            <person name="Schobel S."/>
            <person name="Town C.D."/>
        </authorList>
    </citation>
    <scope>GENOME REANNOTATION</scope>
    <source>
        <strain>cv. Columbia</strain>
    </source>
</reference>
<reference key="3">
    <citation type="submission" date="2002-03" db="EMBL/GenBank/DDBJ databases">
        <title>Full-length cDNA from Arabidopsis thaliana.</title>
        <authorList>
            <person name="Brover V.V."/>
            <person name="Troukhan M.E."/>
            <person name="Alexandrov N.A."/>
            <person name="Lu Y.-P."/>
            <person name="Flavell R.B."/>
            <person name="Feldmann K.A."/>
        </authorList>
    </citation>
    <scope>NUCLEOTIDE SEQUENCE [LARGE SCALE MRNA]</scope>
</reference>
<reference key="4">
    <citation type="submission" date="2006-05" db="EMBL/GenBank/DDBJ databases">
        <title>Arabidopsis ORF clones.</title>
        <authorList>
            <person name="Quinitio C."/>
            <person name="Chen H."/>
            <person name="Kim C.J."/>
            <person name="Shinn P."/>
            <person name="Ecker J.R."/>
        </authorList>
    </citation>
    <scope>NUCLEOTIDE SEQUENCE [LARGE SCALE MRNA]</scope>
    <source>
        <strain>cv. Columbia</strain>
    </source>
</reference>
<reference key="5">
    <citation type="journal article" date="2004" name="J. Biol. Chem.">
        <title>Post-translational modifications of arabinogalactan-peptides of Arabidopsis thaliana. Endoplasmic reticulum and glycosylphosphatidylinositol-anchor signal cleavage sites and hydroxylation of proline.</title>
        <authorList>
            <person name="Schultz C.J."/>
            <person name="Ferguson K.L."/>
            <person name="Lahnstein J."/>
            <person name="Bacic A."/>
        </authorList>
    </citation>
    <scope>PROTEIN SEQUENCE OF 27-37</scope>
    <scope>HYDROXYLATION AT PRO-31; PRO-33 AND PRO-35</scope>
    <scope>PYROGLUTAMATE FORMATION AT GLN-27</scope>
    <scope>GLYCOSYLATION AT PRO-31; PRO-33 AND PRO-35</scope>
    <scope>GPI-ANCHOR AT SER-37</scope>
</reference>
<reference key="6">
    <citation type="journal article" date="2002" name="Plant Physiol.">
        <title>Using genomic resources to guide research directions. The arabinogalactan protein gene family as a test case.</title>
        <authorList>
            <person name="Schultz C.J."/>
            <person name="Rumsewicz M.P."/>
            <person name="Johnson K.L."/>
            <person name="Jones B.J."/>
            <person name="Gaspar Y.M."/>
            <person name="Bacic A."/>
        </authorList>
    </citation>
    <scope>GENE FAMILY</scope>
    <scope>NOMENCLATURE</scope>
</reference>
<feature type="signal peptide" evidence="2">
    <location>
        <begin position="1"/>
        <end position="26"/>
    </location>
</feature>
<feature type="peptide" id="PRO_0000269021" description="Arabinogalactan protein 20" evidence="2">
    <location>
        <begin position="27"/>
        <end position="37"/>
    </location>
</feature>
<feature type="propeptide" id="PRO_0000269022" description="Removed in mature form" evidence="5">
    <location>
        <begin position="38"/>
        <end position="74"/>
    </location>
</feature>
<feature type="modified residue" description="Pyrrolidone carboxylic acid" evidence="2">
    <location>
        <position position="27"/>
    </location>
</feature>
<feature type="modified residue" description="4-hydroxyproline" evidence="2">
    <location>
        <position position="31"/>
    </location>
</feature>
<feature type="modified residue" description="4-hydroxyproline" evidence="2">
    <location>
        <position position="33"/>
    </location>
</feature>
<feature type="modified residue" description="4-hydroxyproline" evidence="2">
    <location>
        <position position="35"/>
    </location>
</feature>
<feature type="lipid moiety-binding region" description="GPI-anchor amidated serine" evidence="2">
    <location>
        <position position="37"/>
    </location>
</feature>
<feature type="glycosylation site" description="O-linked (Ara...) hydroxyproline" evidence="1">
    <location>
        <position position="31"/>
    </location>
</feature>
<feature type="glycosylation site" description="O-linked (Ara...) hydroxyproline" evidence="1">
    <location>
        <position position="33"/>
    </location>
</feature>
<feature type="glycosylation site" description="O-linked (Ara...) hydroxyproline" evidence="1">
    <location>
        <position position="35"/>
    </location>
</feature>
<evidence type="ECO:0000255" key="1"/>
<evidence type="ECO:0000269" key="2">
    <source>
    </source>
</evidence>
<evidence type="ECO:0000303" key="3">
    <source>
    </source>
</evidence>
<evidence type="ECO:0000305" key="4"/>
<evidence type="ECO:0000305" key="5">
    <source>
    </source>
</evidence>
<sequence>MASRNSVAVIALFAFVFAVISPFAGAQSLAPAPSPTSDGTSIDQGIAYLLMVVALVLTYLIHPLDASSSSYTFF</sequence>
<keyword id="KW-1003">Cell membrane</keyword>
<keyword id="KW-0903">Direct protein sequencing</keyword>
<keyword id="KW-0325">Glycoprotein</keyword>
<keyword id="KW-0336">GPI-anchor</keyword>
<keyword id="KW-0379">Hydroxylation</keyword>
<keyword id="KW-0449">Lipoprotein</keyword>
<keyword id="KW-0472">Membrane</keyword>
<keyword id="KW-0654">Proteoglycan</keyword>
<keyword id="KW-0873">Pyrrolidone carboxylic acid</keyword>
<keyword id="KW-1185">Reference proteome</keyword>
<keyword id="KW-0732">Signal</keyword>
<protein>
    <recommendedName>
        <fullName evidence="3">Arabinogalactan protein 20</fullName>
        <shortName evidence="3">AtAGP20</shortName>
    </recommendedName>
    <alternativeName>
        <fullName evidence="3">Arabinogalactan peptide 20</fullName>
        <shortName evidence="3">AG-peptide 20</shortName>
    </alternativeName>
</protein>
<name>AGP20_ARATH</name>
<organism>
    <name type="scientific">Arabidopsis thaliana</name>
    <name type="common">Mouse-ear cress</name>
    <dbReference type="NCBI Taxonomy" id="3702"/>
    <lineage>
        <taxon>Eukaryota</taxon>
        <taxon>Viridiplantae</taxon>
        <taxon>Streptophyta</taxon>
        <taxon>Embryophyta</taxon>
        <taxon>Tracheophyta</taxon>
        <taxon>Spermatophyta</taxon>
        <taxon>Magnoliopsida</taxon>
        <taxon>eudicotyledons</taxon>
        <taxon>Gunneridae</taxon>
        <taxon>Pentapetalae</taxon>
        <taxon>rosids</taxon>
        <taxon>malvids</taxon>
        <taxon>Brassicales</taxon>
        <taxon>Brassicaceae</taxon>
        <taxon>Camelineae</taxon>
        <taxon>Arabidopsis</taxon>
    </lineage>
</organism>
<dbReference type="EMBL" id="AL132959">
    <property type="protein sequence ID" value="CAB71094.1"/>
    <property type="molecule type" value="Genomic_DNA"/>
</dbReference>
<dbReference type="EMBL" id="CP002686">
    <property type="protein sequence ID" value="AEE80235.1"/>
    <property type="molecule type" value="Genomic_DNA"/>
</dbReference>
<dbReference type="EMBL" id="AY084640">
    <property type="protein sequence ID" value="AAM61203.1"/>
    <property type="molecule type" value="mRNA"/>
</dbReference>
<dbReference type="EMBL" id="BT025563">
    <property type="protein sequence ID" value="ABF58981.1"/>
    <property type="molecule type" value="mRNA"/>
</dbReference>
<dbReference type="PIR" id="T47956">
    <property type="entry name" value="T47956"/>
</dbReference>
<dbReference type="RefSeq" id="NP_191723.1">
    <property type="nucleotide sequence ID" value="NM_116029.3"/>
</dbReference>
<dbReference type="FunCoup" id="Q9M373">
    <property type="interactions" value="72"/>
</dbReference>
<dbReference type="STRING" id="3702.Q9M373"/>
<dbReference type="GlyCosmos" id="Q9M373">
    <property type="glycosylation" value="3 sites, No reported glycans"/>
</dbReference>
<dbReference type="PaxDb" id="3702-AT3G61640.1"/>
<dbReference type="EnsemblPlants" id="AT3G61640.1">
    <property type="protein sequence ID" value="AT3G61640.1"/>
    <property type="gene ID" value="AT3G61640"/>
</dbReference>
<dbReference type="GeneID" id="825337"/>
<dbReference type="Gramene" id="AT3G61640.1">
    <property type="protein sequence ID" value="AT3G61640.1"/>
    <property type="gene ID" value="AT3G61640"/>
</dbReference>
<dbReference type="KEGG" id="ath:AT3G61640"/>
<dbReference type="Araport" id="AT3G61640"/>
<dbReference type="TAIR" id="AT3G61640">
    <property type="gene designation" value="AGP20"/>
</dbReference>
<dbReference type="eggNOG" id="ENOG502S708">
    <property type="taxonomic scope" value="Eukaryota"/>
</dbReference>
<dbReference type="HOGENOM" id="CLU_187330_0_0_1"/>
<dbReference type="InParanoid" id="Q9M373"/>
<dbReference type="OMA" id="IFAISMP"/>
<dbReference type="OrthoDB" id="777504at2759"/>
<dbReference type="PhylomeDB" id="Q9M373"/>
<dbReference type="PRO" id="PR:Q9M373"/>
<dbReference type="Proteomes" id="UP000006548">
    <property type="component" value="Chromosome 3"/>
</dbReference>
<dbReference type="ExpressionAtlas" id="Q9M373">
    <property type="expression patterns" value="baseline and differential"/>
</dbReference>
<dbReference type="GO" id="GO:0005886">
    <property type="term" value="C:plasma membrane"/>
    <property type="evidence" value="ECO:0007669"/>
    <property type="project" value="UniProtKB-SubCell"/>
</dbReference>
<dbReference type="GO" id="GO:0098552">
    <property type="term" value="C:side of membrane"/>
    <property type="evidence" value="ECO:0007669"/>
    <property type="project" value="UniProtKB-KW"/>
</dbReference>
<dbReference type="InterPro" id="IPR009424">
    <property type="entry name" value="AGP16/20/22/41"/>
</dbReference>
<dbReference type="PANTHER" id="PTHR33374">
    <property type="entry name" value="ARABINOGALACTAN PROTEIN 20"/>
    <property type="match status" value="1"/>
</dbReference>
<dbReference type="Pfam" id="PF06376">
    <property type="entry name" value="AGP"/>
    <property type="match status" value="1"/>
</dbReference>
<gene>
    <name evidence="3" type="primary">AGP20</name>
    <name type="ordered locus">At3g61640</name>
    <name type="ORF">F15G16.30</name>
</gene>
<proteinExistence type="evidence at protein level"/>
<accession>Q9M373</accession>
<comment type="function">
    <text>Proteoglycan that seems to be implicated in diverse developmental roles such as differentiation, cell-cell recognition, embryogenesis and programmed cell death.</text>
</comment>
<comment type="subcellular location">
    <subcellularLocation>
        <location evidence="4">Cell membrane</location>
        <topology evidence="4">Lipid-anchor</topology>
        <topology evidence="4">GPI-anchor</topology>
    </subcellularLocation>
</comment>
<comment type="PTM">
    <text evidence="2">Contains 4-hydroxyproline; hydroxylated on Pro-31, Pro-33 and Pro-35.</text>
</comment>
<comment type="PTM">
    <text evidence="5">O-glycosylated on hydroxyprolines; noncontiguous hydroxylproline residues are glycosylated with arabinogalactan.</text>
</comment>
<comment type="similarity">
    <text evidence="4">Belongs to the AG-peptide AGP family.</text>
</comment>